<evidence type="ECO:0000255" key="1">
    <source>
        <dbReference type="HAMAP-Rule" id="MF_01310"/>
    </source>
</evidence>
<evidence type="ECO:0000256" key="2">
    <source>
        <dbReference type="SAM" id="MobiDB-lite"/>
    </source>
</evidence>
<evidence type="ECO:0000305" key="3"/>
<gene>
    <name evidence="1" type="primary">rps11</name>
    <name type="ordered locus">CsCp075</name>
</gene>
<feature type="chain" id="PRO_0000230447" description="Small ribosomal subunit protein uS11c">
    <location>
        <begin position="1"/>
        <end position="138"/>
    </location>
</feature>
<feature type="region of interest" description="Disordered" evidence="2">
    <location>
        <begin position="1"/>
        <end position="23"/>
    </location>
</feature>
<feature type="compositionally biased region" description="Basic residues" evidence="2">
    <location>
        <begin position="9"/>
        <end position="23"/>
    </location>
</feature>
<comment type="subunit">
    <text evidence="1">Part of the 30S ribosomal subunit.</text>
</comment>
<comment type="subcellular location">
    <subcellularLocation>
        <location>Plastid</location>
        <location>Chloroplast</location>
    </subcellularLocation>
</comment>
<comment type="similarity">
    <text evidence="1">Belongs to the universal ribosomal protein uS11 family.</text>
</comment>
<reference key="1">
    <citation type="journal article" date="2006" name="Plant Cell Rep.">
        <title>Complete sequence and organization of the cucumber (Cucumis sativus L. cv. Baekmibaekdadagi) chloroplast genome.</title>
        <authorList>
            <person name="Kim J.-S."/>
            <person name="Jung J.D."/>
            <person name="Lee J.-A."/>
            <person name="Park H.-W."/>
            <person name="Oh K.-H."/>
            <person name="Jeong W.J."/>
            <person name="Choi D.-W."/>
            <person name="Liu J.R."/>
            <person name="Cho K.Y."/>
        </authorList>
    </citation>
    <scope>NUCLEOTIDE SEQUENCE [LARGE SCALE GENOMIC DNA]</scope>
    <source>
        <strain>cv. Baekmibaekdadagi</strain>
    </source>
</reference>
<reference key="2">
    <citation type="journal article" date="2007" name="Cell. Mol. Biol. Lett.">
        <title>The complete structure of the cucumber (Cucumis sativus L.) chloroplast genome: its composition and comparative analysis.</title>
        <authorList>
            <person name="Plader W.W."/>
            <person name="Yukawa Y."/>
            <person name="Sugiura M."/>
            <person name="Malepszy S."/>
        </authorList>
    </citation>
    <scope>NUCLEOTIDE SEQUENCE [LARGE SCALE GENOMIC DNA]</scope>
    <source>
        <strain>cv. Borszczagowski</strain>
    </source>
</reference>
<reference key="3">
    <citation type="journal article" date="2007" name="Genome">
        <title>Sequencing cucumber (Cucumis sativus L.) chloroplast genomes identifies differences between chilling-tolerant and -susceptible cucumber lines.</title>
        <authorList>
            <person name="Chung S.-M."/>
            <person name="Gordon V.S."/>
            <person name="Staub J.E."/>
        </authorList>
    </citation>
    <scope>NUCLEOTIDE SEQUENCE [LARGE SCALE GENOMIC DNA]</scope>
    <source>
        <strain>cv. Chipper</strain>
        <strain>cv. Gy14</strain>
    </source>
</reference>
<protein>
    <recommendedName>
        <fullName evidence="1">Small ribosomal subunit protein uS11c</fullName>
    </recommendedName>
    <alternativeName>
        <fullName evidence="3">30S ribosomal protein S11, chloroplastic</fullName>
    </alternativeName>
</protein>
<accession>Q4VZK2</accession>
<accession>A5J1W7</accession>
<sequence length="138" mass="14969">MAKPIPRIGSRRNGRISSRKSTRRIPKGVIHVQASFNNTIVTVTDVRGRVISWSSAGTCGFKGTRRGTPFAAQTAAGNAIRGVVDQGMQRAEVMIKGPGLGRDAALRAIRRSGILLSFIRDVTPMPHNGCRPPKKRRV</sequence>
<proteinExistence type="inferred from homology"/>
<organism>
    <name type="scientific">Cucumis sativus</name>
    <name type="common">Cucumber</name>
    <dbReference type="NCBI Taxonomy" id="3659"/>
    <lineage>
        <taxon>Eukaryota</taxon>
        <taxon>Viridiplantae</taxon>
        <taxon>Streptophyta</taxon>
        <taxon>Embryophyta</taxon>
        <taxon>Tracheophyta</taxon>
        <taxon>Spermatophyta</taxon>
        <taxon>Magnoliopsida</taxon>
        <taxon>eudicotyledons</taxon>
        <taxon>Gunneridae</taxon>
        <taxon>Pentapetalae</taxon>
        <taxon>rosids</taxon>
        <taxon>fabids</taxon>
        <taxon>Cucurbitales</taxon>
        <taxon>Cucurbitaceae</taxon>
        <taxon>Benincaseae</taxon>
        <taxon>Cucumis</taxon>
    </lineage>
</organism>
<keyword id="KW-0150">Chloroplast</keyword>
<keyword id="KW-0934">Plastid</keyword>
<keyword id="KW-0687">Ribonucleoprotein</keyword>
<keyword id="KW-0689">Ribosomal protein</keyword>
<keyword id="KW-0694">RNA-binding</keyword>
<keyword id="KW-0699">rRNA-binding</keyword>
<name>RR11_CUCSA</name>
<geneLocation type="chloroplast"/>
<dbReference type="EMBL" id="DQ119058">
    <property type="protein sequence ID" value="AAZ94683.1"/>
    <property type="molecule type" value="Genomic_DNA"/>
</dbReference>
<dbReference type="EMBL" id="AJ970307">
    <property type="protein sequence ID" value="CAJ00792.1"/>
    <property type="molecule type" value="Genomic_DNA"/>
</dbReference>
<dbReference type="EMBL" id="DQ865975">
    <property type="protein sequence ID" value="ABI97449.1"/>
    <property type="molecule type" value="Genomic_DNA"/>
</dbReference>
<dbReference type="EMBL" id="DQ865976">
    <property type="protein sequence ID" value="ABI98778.1"/>
    <property type="molecule type" value="Genomic_DNA"/>
</dbReference>
<dbReference type="RefSeq" id="YP_247633.1">
    <property type="nucleotide sequence ID" value="NC_007144.1"/>
</dbReference>
<dbReference type="SMR" id="Q4VZK2"/>
<dbReference type="GeneID" id="3429305"/>
<dbReference type="KEGG" id="csv:3429305"/>
<dbReference type="OrthoDB" id="535480at2759"/>
<dbReference type="GO" id="GO:0009507">
    <property type="term" value="C:chloroplast"/>
    <property type="evidence" value="ECO:0007669"/>
    <property type="project" value="UniProtKB-SubCell"/>
</dbReference>
<dbReference type="GO" id="GO:1990904">
    <property type="term" value="C:ribonucleoprotein complex"/>
    <property type="evidence" value="ECO:0007669"/>
    <property type="project" value="UniProtKB-KW"/>
</dbReference>
<dbReference type="GO" id="GO:0005840">
    <property type="term" value="C:ribosome"/>
    <property type="evidence" value="ECO:0007669"/>
    <property type="project" value="UniProtKB-KW"/>
</dbReference>
<dbReference type="GO" id="GO:0019843">
    <property type="term" value="F:rRNA binding"/>
    <property type="evidence" value="ECO:0007669"/>
    <property type="project" value="UniProtKB-UniRule"/>
</dbReference>
<dbReference type="GO" id="GO:0003735">
    <property type="term" value="F:structural constituent of ribosome"/>
    <property type="evidence" value="ECO:0007669"/>
    <property type="project" value="InterPro"/>
</dbReference>
<dbReference type="GO" id="GO:0006412">
    <property type="term" value="P:translation"/>
    <property type="evidence" value="ECO:0007669"/>
    <property type="project" value="UniProtKB-UniRule"/>
</dbReference>
<dbReference type="FunFam" id="3.30.420.80:FF:000003">
    <property type="entry name" value="30S ribosomal protein S11, chloroplastic"/>
    <property type="match status" value="1"/>
</dbReference>
<dbReference type="Gene3D" id="3.30.420.80">
    <property type="entry name" value="Ribosomal protein S11"/>
    <property type="match status" value="1"/>
</dbReference>
<dbReference type="HAMAP" id="MF_01310">
    <property type="entry name" value="Ribosomal_uS11"/>
    <property type="match status" value="1"/>
</dbReference>
<dbReference type="InterPro" id="IPR001971">
    <property type="entry name" value="Ribosomal_uS11"/>
</dbReference>
<dbReference type="InterPro" id="IPR019981">
    <property type="entry name" value="Ribosomal_uS11_bac-type"/>
</dbReference>
<dbReference type="InterPro" id="IPR018102">
    <property type="entry name" value="Ribosomal_uS11_CS"/>
</dbReference>
<dbReference type="InterPro" id="IPR036967">
    <property type="entry name" value="Ribosomal_uS11_sf"/>
</dbReference>
<dbReference type="NCBIfam" id="NF003698">
    <property type="entry name" value="PRK05309.1"/>
    <property type="match status" value="1"/>
</dbReference>
<dbReference type="NCBIfam" id="TIGR03632">
    <property type="entry name" value="uS11_bact"/>
    <property type="match status" value="1"/>
</dbReference>
<dbReference type="PANTHER" id="PTHR11759">
    <property type="entry name" value="40S RIBOSOMAL PROTEIN S14/30S RIBOSOMAL PROTEIN S11"/>
    <property type="match status" value="1"/>
</dbReference>
<dbReference type="Pfam" id="PF00411">
    <property type="entry name" value="Ribosomal_S11"/>
    <property type="match status" value="1"/>
</dbReference>
<dbReference type="PIRSF" id="PIRSF002131">
    <property type="entry name" value="Ribosomal_S11"/>
    <property type="match status" value="1"/>
</dbReference>
<dbReference type="SUPFAM" id="SSF53137">
    <property type="entry name" value="Translational machinery components"/>
    <property type="match status" value="1"/>
</dbReference>
<dbReference type="PROSITE" id="PS00054">
    <property type="entry name" value="RIBOSOMAL_S11"/>
    <property type="match status" value="1"/>
</dbReference>